<gene>
    <name evidence="6" type="ordered locus">BCG_0231</name>
</gene>
<reference key="1">
    <citation type="journal article" date="2007" name="Proc. Natl. Acad. Sci. U.S.A.">
        <title>Genome plasticity of BCG and impact on vaccine efficacy.</title>
        <authorList>
            <person name="Brosch R."/>
            <person name="Gordon S.V."/>
            <person name="Garnier T."/>
            <person name="Eiglmeier K."/>
            <person name="Frigui W."/>
            <person name="Valenti P."/>
            <person name="Dos Santos S."/>
            <person name="Duthoy S."/>
            <person name="Lacroix C."/>
            <person name="Garcia-Pelayo C."/>
            <person name="Inwald J.K."/>
            <person name="Golby P."/>
            <person name="Garcia J.N."/>
            <person name="Hewinson R.G."/>
            <person name="Behr M.A."/>
            <person name="Quail M.A."/>
            <person name="Churcher C."/>
            <person name="Barrell B.G."/>
            <person name="Parkhill J."/>
            <person name="Cole S.T."/>
        </authorList>
    </citation>
    <scope>NUCLEOTIDE SEQUENCE [LARGE SCALE GENOMIC DNA]</scope>
    <source>
        <strain>BCG / Pasteur 1173P2</strain>
    </source>
</reference>
<reference key="2">
    <citation type="journal article" date="2008" name="Antimicrob. Agents Chemother.">
        <title>Identification of a novel multidrug efflux pump of Mycobacterium tuberculosis.</title>
        <authorList>
            <person name="Danilchanka O."/>
            <person name="Mailaender C."/>
            <person name="Niederweis M."/>
        </authorList>
    </citation>
    <scope>FUNCTION IN ANTIBIOTIC RESISTANCE</scope>
    <source>
        <strain>BCG / Pasteur 1173P2</strain>
    </source>
</reference>
<name>MDREP_MYCBP</name>
<keyword id="KW-0046">Antibiotic resistance</keyword>
<keyword id="KW-0067">ATP-binding</keyword>
<keyword id="KW-0997">Cell inner membrane</keyword>
<keyword id="KW-1003">Cell membrane</keyword>
<keyword id="KW-0472">Membrane</keyword>
<keyword id="KW-0547">Nucleotide-binding</keyword>
<keyword id="KW-0677">Repeat</keyword>
<keyword id="KW-1278">Translocase</keyword>
<keyword id="KW-0812">Transmembrane</keyword>
<keyword id="KW-1133">Transmembrane helix</keyword>
<keyword id="KW-0813">Transport</keyword>
<feature type="chain" id="PRO_0000432860" description="Multidrug efflux ATP-binding/permease protein BCG_0231">
    <location>
        <begin position="1"/>
        <end position="1194"/>
    </location>
</feature>
<feature type="transmembrane region" description="Helical" evidence="1">
    <location>
        <begin position="20"/>
        <end position="40"/>
    </location>
</feature>
<feature type="transmembrane region" description="Helical" evidence="1">
    <location>
        <begin position="56"/>
        <end position="76"/>
    </location>
</feature>
<feature type="transmembrane region" description="Helical" evidence="1">
    <location>
        <begin position="130"/>
        <end position="150"/>
    </location>
</feature>
<feature type="transmembrane region" description="Helical" evidence="1">
    <location>
        <begin position="153"/>
        <end position="173"/>
    </location>
</feature>
<feature type="transmembrane region" description="Helical" evidence="1">
    <location>
        <begin position="258"/>
        <end position="278"/>
    </location>
</feature>
<feature type="transmembrane region" description="Helical" evidence="1">
    <location>
        <begin position="279"/>
        <end position="299"/>
    </location>
</feature>
<feature type="transmembrane region" description="Helical" evidence="1">
    <location>
        <begin position="628"/>
        <end position="648"/>
    </location>
</feature>
<feature type="transmembrane region" description="Helical" evidence="1">
    <location>
        <begin position="660"/>
        <end position="680"/>
    </location>
</feature>
<feature type="transmembrane region" description="Helical" evidence="1">
    <location>
        <begin position="743"/>
        <end position="763"/>
    </location>
</feature>
<feature type="transmembrane region" description="Helical" evidence="1">
    <location>
        <begin position="765"/>
        <end position="785"/>
    </location>
</feature>
<feature type="transmembrane region" description="Helical" evidence="1">
    <location>
        <begin position="847"/>
        <end position="867"/>
    </location>
</feature>
<feature type="transmembrane region" description="Helical" evidence="1">
    <location>
        <begin position="878"/>
        <end position="898"/>
    </location>
</feature>
<feature type="domain" description="ABC transmembrane type-1 1" evidence="3">
    <location>
        <begin position="21"/>
        <end position="301"/>
    </location>
</feature>
<feature type="domain" description="ABC transporter 1" evidence="2">
    <location>
        <begin position="334"/>
        <end position="568"/>
    </location>
</feature>
<feature type="domain" description="ABC transmembrane type-1 2" evidence="3">
    <location>
        <begin position="628"/>
        <end position="910"/>
    </location>
</feature>
<feature type="domain" description="ABC transporter 2" evidence="2">
    <location>
        <begin position="942"/>
        <end position="1177"/>
    </location>
</feature>
<feature type="binding site" evidence="2">
    <location>
        <begin position="367"/>
        <end position="374"/>
    </location>
    <ligand>
        <name>ATP</name>
        <dbReference type="ChEBI" id="CHEBI:30616"/>
    </ligand>
</feature>
<feature type="binding site" evidence="2">
    <location>
        <begin position="976"/>
        <end position="983"/>
    </location>
    <ligand>
        <name>ATP</name>
        <dbReference type="ChEBI" id="CHEBI:30616"/>
    </ligand>
</feature>
<comment type="function">
    <text evidence="4">Overexpression increases resistance to chloramphenicol, ampicillin, streptomycin, tetracyclin and vancomycin.</text>
</comment>
<comment type="subcellular location">
    <subcellularLocation>
        <location evidence="5">Cell inner membrane</location>
        <topology evidence="1">Multi-pass membrane protein</topology>
    </subcellularLocation>
</comment>
<comment type="domain">
    <text evidence="5">The ATP-binding domains (NBD) and the transmembrane domains (TMD) are fused.</text>
</comment>
<comment type="similarity">
    <text evidence="5">Belongs to the ABC transporter superfamily. Lipid exporter (TC 3.A.1.106) family.</text>
</comment>
<evidence type="ECO:0000255" key="1"/>
<evidence type="ECO:0000255" key="2">
    <source>
        <dbReference type="PROSITE-ProRule" id="PRU00434"/>
    </source>
</evidence>
<evidence type="ECO:0000255" key="3">
    <source>
        <dbReference type="PROSITE-ProRule" id="PRU00441"/>
    </source>
</evidence>
<evidence type="ECO:0000269" key="4">
    <source>
    </source>
</evidence>
<evidence type="ECO:0000305" key="5"/>
<evidence type="ECO:0000312" key="6">
    <source>
        <dbReference type="EMBL" id="CAL70215.1"/>
    </source>
</evidence>
<sequence length="1194" mass="129267">MRTNCWWRLSGYVMRHRRDLLLGFGAALAGTVIAVLVPLVTKRVIDDAIAADHRPLAPWAVVLVAAAGATYLLTYVRRYYGGRIAHLVQHDLRMDAFQALLRWDGRQQDRWSSGQLIVRTTNDLQLVQALLFDVPNVLRHVLTLLLGVAVMTWLSVPLALLAVLLVPVIGLIAHRSRRLLAAATHCAQEHKAAVTGVVDAAVCGIRVVKAFGQEERETVKLVMASRALYAAQLRVARLNAHFGPLLQTLPALGQMAVFALGGWMAAQGSITVGTFVAFWACLTLLARPACDLAGMLTIAQQARAGAVRVLELIDSRPTLVDGTKPLSLEARLSLEFQRVSFGYVADRPVLREISLSVRAGETLAVVGAPGSGKSTLASLATRCYDVTQGAVRIGGQDVRELTLDSLRSAIGLVPEDAVLFSGTIGANIAYGRPDATPEQIATAARAAHIEEFVNTLPDGYQTAVGARGLTLSGGQRQRIALARALLHQPRLLIMDDPTSAVDAVIECGIQEVLREAIADRTAVIFTRRRSMLTLADRVAVLDSGRLLDVGTPDEVWERCPRYRELLSPAPDLADDLVVAERSPVCRPVAGLGTKAAQHTNVHNPGPHDHPPGPDPLRRLLREFRGPLALSLLLVAVQTCAGLLPPLLIRHGIDVGIRRHVLSALWWAALAGTATVVIRWVVQWGSAMVAGYTGEQVLFRLRSVVFAHAQRLGLDAFEDDGDAQIVTAVTADVEAIVAFLRTGLVVAVISVVTLVGILVALLAIRARLVLLIFTTMPVLALATWQFRRASNWTYRRARHRLGTVTATLREYAAGLRIAQAFRAEYRGLQSYFAHSDDYRRLGVRGQRLLALYYPFVALLCSLATTLVLLDGAREVRAGVISVGALVTYLLYIELLYTPIGELAQMFDDYQRAAVAAGRIRSLLSTRTPSSPAARPVGTLRGEVVFDAVHYSYRTREVPALAGINLRIPAGQTVVFVGSTGSGKSTLIKLVARFYDPTHGTVRVDGCDLREFDVDGYRNRLGIVTQEQYVFAGTVRDAIAYGRPDATDAQVERAAREVGAHPMITALDNGYLHQVTAGGRNLSAGQLQLLALARARLVDPDILLLDEATVALDPATEAVVQRATLTLAARRTTLIVAHGLAIAEHADRIVVLEHGTVVEDGAHTELLAAGGHYSRLWAAHTRLCSPEITQLQCIDA</sequence>
<dbReference type="EC" id="7.6.2.-" evidence="5"/>
<dbReference type="EMBL" id="AM408590">
    <property type="protein sequence ID" value="CAL70215.1"/>
    <property type="molecule type" value="Genomic_DNA"/>
</dbReference>
<dbReference type="RefSeq" id="WP_011799083.1">
    <property type="nucleotide sequence ID" value="NC_008769.1"/>
</dbReference>
<dbReference type="SMR" id="A1KF14"/>
<dbReference type="KEGG" id="mbb:BCG_0231"/>
<dbReference type="HOGENOM" id="CLU_000604_17_6_11"/>
<dbReference type="Proteomes" id="UP000001472">
    <property type="component" value="Chromosome"/>
</dbReference>
<dbReference type="GO" id="GO:0005886">
    <property type="term" value="C:plasma membrane"/>
    <property type="evidence" value="ECO:0007669"/>
    <property type="project" value="UniProtKB-SubCell"/>
</dbReference>
<dbReference type="GO" id="GO:0015421">
    <property type="term" value="F:ABC-type oligopeptide transporter activity"/>
    <property type="evidence" value="ECO:0007669"/>
    <property type="project" value="TreeGrafter"/>
</dbReference>
<dbReference type="GO" id="GO:0005524">
    <property type="term" value="F:ATP binding"/>
    <property type="evidence" value="ECO:0007669"/>
    <property type="project" value="UniProtKB-KW"/>
</dbReference>
<dbReference type="GO" id="GO:0016887">
    <property type="term" value="F:ATP hydrolysis activity"/>
    <property type="evidence" value="ECO:0007669"/>
    <property type="project" value="InterPro"/>
</dbReference>
<dbReference type="GO" id="GO:0046677">
    <property type="term" value="P:response to antibiotic"/>
    <property type="evidence" value="ECO:0007669"/>
    <property type="project" value="UniProtKB-KW"/>
</dbReference>
<dbReference type="CDD" id="cd18543">
    <property type="entry name" value="ABC_6TM_Rv0194_D1_like"/>
    <property type="match status" value="1"/>
</dbReference>
<dbReference type="CDD" id="cd18546">
    <property type="entry name" value="ABC_6TM_Rv0194_D2_like"/>
    <property type="match status" value="1"/>
</dbReference>
<dbReference type="FunFam" id="3.40.50.300:FF:000299">
    <property type="entry name" value="ABC transporter ATP-binding protein/permease"/>
    <property type="match status" value="2"/>
</dbReference>
<dbReference type="Gene3D" id="1.20.1560.10">
    <property type="entry name" value="ABC transporter type 1, transmembrane domain"/>
    <property type="match status" value="2"/>
</dbReference>
<dbReference type="Gene3D" id="3.40.50.300">
    <property type="entry name" value="P-loop containing nucleotide triphosphate hydrolases"/>
    <property type="match status" value="2"/>
</dbReference>
<dbReference type="InterPro" id="IPR003593">
    <property type="entry name" value="AAA+_ATPase"/>
</dbReference>
<dbReference type="InterPro" id="IPR011527">
    <property type="entry name" value="ABC1_TM_dom"/>
</dbReference>
<dbReference type="InterPro" id="IPR036640">
    <property type="entry name" value="ABC1_TM_sf"/>
</dbReference>
<dbReference type="InterPro" id="IPR003439">
    <property type="entry name" value="ABC_transporter-like_ATP-bd"/>
</dbReference>
<dbReference type="InterPro" id="IPR017871">
    <property type="entry name" value="ABC_transporter-like_CS"/>
</dbReference>
<dbReference type="InterPro" id="IPR027417">
    <property type="entry name" value="P-loop_NTPase"/>
</dbReference>
<dbReference type="InterPro" id="IPR039421">
    <property type="entry name" value="Type_1_exporter"/>
</dbReference>
<dbReference type="PANTHER" id="PTHR43394:SF1">
    <property type="entry name" value="ATP-BINDING CASSETTE SUB-FAMILY B MEMBER 10, MITOCHONDRIAL"/>
    <property type="match status" value="1"/>
</dbReference>
<dbReference type="PANTHER" id="PTHR43394">
    <property type="entry name" value="ATP-DEPENDENT PERMEASE MDL1, MITOCHONDRIAL"/>
    <property type="match status" value="1"/>
</dbReference>
<dbReference type="Pfam" id="PF00664">
    <property type="entry name" value="ABC_membrane"/>
    <property type="match status" value="2"/>
</dbReference>
<dbReference type="Pfam" id="PF00005">
    <property type="entry name" value="ABC_tran"/>
    <property type="match status" value="2"/>
</dbReference>
<dbReference type="SMART" id="SM00382">
    <property type="entry name" value="AAA"/>
    <property type="match status" value="2"/>
</dbReference>
<dbReference type="SUPFAM" id="SSF90123">
    <property type="entry name" value="ABC transporter transmembrane region"/>
    <property type="match status" value="2"/>
</dbReference>
<dbReference type="SUPFAM" id="SSF52540">
    <property type="entry name" value="P-loop containing nucleoside triphosphate hydrolases"/>
    <property type="match status" value="2"/>
</dbReference>
<dbReference type="PROSITE" id="PS50929">
    <property type="entry name" value="ABC_TM1F"/>
    <property type="match status" value="2"/>
</dbReference>
<dbReference type="PROSITE" id="PS00211">
    <property type="entry name" value="ABC_TRANSPORTER_1"/>
    <property type="match status" value="1"/>
</dbReference>
<dbReference type="PROSITE" id="PS50893">
    <property type="entry name" value="ABC_TRANSPORTER_2"/>
    <property type="match status" value="2"/>
</dbReference>
<accession>A1KF14</accession>
<proteinExistence type="evidence at protein level"/>
<organism>
    <name type="scientific">Mycobacterium bovis (strain BCG / Pasteur 1173P2)</name>
    <dbReference type="NCBI Taxonomy" id="410289"/>
    <lineage>
        <taxon>Bacteria</taxon>
        <taxon>Bacillati</taxon>
        <taxon>Actinomycetota</taxon>
        <taxon>Actinomycetes</taxon>
        <taxon>Mycobacteriales</taxon>
        <taxon>Mycobacteriaceae</taxon>
        <taxon>Mycobacterium</taxon>
        <taxon>Mycobacterium tuberculosis complex</taxon>
    </lineage>
</organism>
<protein>
    <recommendedName>
        <fullName evidence="5">Multidrug efflux ATP-binding/permease protein BCG_0231</fullName>
        <ecNumber evidence="5">7.6.2.-</ecNumber>
    </recommendedName>
</protein>